<dbReference type="EC" id="2.1.2.1" evidence="1"/>
<dbReference type="EMBL" id="AM260522">
    <property type="protein sequence ID" value="CAJ99206.1"/>
    <property type="molecule type" value="Genomic_DNA"/>
</dbReference>
<dbReference type="RefSeq" id="WP_011577321.1">
    <property type="nucleotide sequence ID" value="NC_008229.1"/>
</dbReference>
<dbReference type="SMR" id="Q17YS0"/>
<dbReference type="STRING" id="382638.Hac_0369"/>
<dbReference type="GeneID" id="31757878"/>
<dbReference type="KEGG" id="hac:Hac_0369"/>
<dbReference type="eggNOG" id="COG0112">
    <property type="taxonomic scope" value="Bacteria"/>
</dbReference>
<dbReference type="HOGENOM" id="CLU_022477_2_1_7"/>
<dbReference type="OrthoDB" id="9803846at2"/>
<dbReference type="BioCyc" id="HACI382638:HAC_RS01660-MONOMER"/>
<dbReference type="UniPathway" id="UPA00193"/>
<dbReference type="UniPathway" id="UPA00288">
    <property type="reaction ID" value="UER01023"/>
</dbReference>
<dbReference type="Proteomes" id="UP000000775">
    <property type="component" value="Chromosome"/>
</dbReference>
<dbReference type="GO" id="GO:0005829">
    <property type="term" value="C:cytosol"/>
    <property type="evidence" value="ECO:0007669"/>
    <property type="project" value="TreeGrafter"/>
</dbReference>
<dbReference type="GO" id="GO:0004372">
    <property type="term" value="F:glycine hydroxymethyltransferase activity"/>
    <property type="evidence" value="ECO:0007669"/>
    <property type="project" value="UniProtKB-UniRule"/>
</dbReference>
<dbReference type="GO" id="GO:0030170">
    <property type="term" value="F:pyridoxal phosphate binding"/>
    <property type="evidence" value="ECO:0007669"/>
    <property type="project" value="UniProtKB-UniRule"/>
</dbReference>
<dbReference type="GO" id="GO:0019264">
    <property type="term" value="P:glycine biosynthetic process from serine"/>
    <property type="evidence" value="ECO:0007669"/>
    <property type="project" value="UniProtKB-UniRule"/>
</dbReference>
<dbReference type="GO" id="GO:0035999">
    <property type="term" value="P:tetrahydrofolate interconversion"/>
    <property type="evidence" value="ECO:0007669"/>
    <property type="project" value="UniProtKB-UniRule"/>
</dbReference>
<dbReference type="CDD" id="cd00378">
    <property type="entry name" value="SHMT"/>
    <property type="match status" value="1"/>
</dbReference>
<dbReference type="FunFam" id="3.40.640.10:FF:000001">
    <property type="entry name" value="Serine hydroxymethyltransferase"/>
    <property type="match status" value="1"/>
</dbReference>
<dbReference type="Gene3D" id="3.90.1150.10">
    <property type="entry name" value="Aspartate Aminotransferase, domain 1"/>
    <property type="match status" value="1"/>
</dbReference>
<dbReference type="Gene3D" id="3.40.640.10">
    <property type="entry name" value="Type I PLP-dependent aspartate aminotransferase-like (Major domain)"/>
    <property type="match status" value="1"/>
</dbReference>
<dbReference type="HAMAP" id="MF_00051">
    <property type="entry name" value="SHMT"/>
    <property type="match status" value="1"/>
</dbReference>
<dbReference type="InterPro" id="IPR015424">
    <property type="entry name" value="PyrdxlP-dep_Trfase"/>
</dbReference>
<dbReference type="InterPro" id="IPR015421">
    <property type="entry name" value="PyrdxlP-dep_Trfase_major"/>
</dbReference>
<dbReference type="InterPro" id="IPR015422">
    <property type="entry name" value="PyrdxlP-dep_Trfase_small"/>
</dbReference>
<dbReference type="InterPro" id="IPR001085">
    <property type="entry name" value="Ser_HO-MeTrfase"/>
</dbReference>
<dbReference type="InterPro" id="IPR049943">
    <property type="entry name" value="Ser_HO-MeTrfase-like"/>
</dbReference>
<dbReference type="InterPro" id="IPR019798">
    <property type="entry name" value="Ser_HO-MeTrfase_PLP_BS"/>
</dbReference>
<dbReference type="InterPro" id="IPR039429">
    <property type="entry name" value="SHMT-like_dom"/>
</dbReference>
<dbReference type="NCBIfam" id="NF000586">
    <property type="entry name" value="PRK00011.1"/>
    <property type="match status" value="1"/>
</dbReference>
<dbReference type="PANTHER" id="PTHR11680">
    <property type="entry name" value="SERINE HYDROXYMETHYLTRANSFERASE"/>
    <property type="match status" value="1"/>
</dbReference>
<dbReference type="PANTHER" id="PTHR11680:SF50">
    <property type="entry name" value="SERINE HYDROXYMETHYLTRANSFERASE"/>
    <property type="match status" value="1"/>
</dbReference>
<dbReference type="Pfam" id="PF00464">
    <property type="entry name" value="SHMT"/>
    <property type="match status" value="1"/>
</dbReference>
<dbReference type="PIRSF" id="PIRSF000412">
    <property type="entry name" value="SHMT"/>
    <property type="match status" value="1"/>
</dbReference>
<dbReference type="SUPFAM" id="SSF53383">
    <property type="entry name" value="PLP-dependent transferases"/>
    <property type="match status" value="1"/>
</dbReference>
<dbReference type="PROSITE" id="PS00096">
    <property type="entry name" value="SHMT"/>
    <property type="match status" value="1"/>
</dbReference>
<sequence length="416" mass="45642">MAYFLEQSDSEIFELIFEEFKRQNEHLEMIASENYTFASVMEAMGSILTNKYAEGYPNKRYYGGCEVVDKVESLAIERAKKLFNCQFANVQAHSGSQANNAVYHALLKPYDKILGMDLSCGGHLTHGAKVSLTGKHYQSFSYGVGLDGYIDYGETLKIAQSVKPQIIVCGFSAYPREIDFKKFREIADEVGALLLGDIAHVAGLVVASEHAHPFPHCHVVSSTTHKTLRGPRGGLILTNDEEIAAKIDKAIFPGTQGGPLMHAIAAKAVGFKENLKPEFKTYAKLVKSNMQVLAKVLKEKNHKLVSDGTSNHLLLMDFLNKPYSGKDADIALGNAGITVNKNTIPGETRSPFVTSGIRIGSAALSARGMGTKEFEIIGNKISDILNDINNVSLQLHVKEELKAMASQFPVYHQPIF</sequence>
<evidence type="ECO:0000255" key="1">
    <source>
        <dbReference type="HAMAP-Rule" id="MF_00051"/>
    </source>
</evidence>
<organism>
    <name type="scientific">Helicobacter acinonychis (strain Sheeba)</name>
    <dbReference type="NCBI Taxonomy" id="382638"/>
    <lineage>
        <taxon>Bacteria</taxon>
        <taxon>Pseudomonadati</taxon>
        <taxon>Campylobacterota</taxon>
        <taxon>Epsilonproteobacteria</taxon>
        <taxon>Campylobacterales</taxon>
        <taxon>Helicobacteraceae</taxon>
        <taxon>Helicobacter</taxon>
    </lineage>
</organism>
<reference key="1">
    <citation type="journal article" date="2006" name="PLoS Genet.">
        <title>Who ate whom? Adaptive Helicobacter genomic changes that accompanied a host jump from early humans to large felines.</title>
        <authorList>
            <person name="Eppinger M."/>
            <person name="Baar C."/>
            <person name="Linz B."/>
            <person name="Raddatz G."/>
            <person name="Lanz C."/>
            <person name="Keller H."/>
            <person name="Morelli G."/>
            <person name="Gressmann H."/>
            <person name="Achtman M."/>
            <person name="Schuster S.C."/>
        </authorList>
    </citation>
    <scope>NUCLEOTIDE SEQUENCE [LARGE SCALE GENOMIC DNA]</scope>
    <source>
        <strain>Sheeba</strain>
    </source>
</reference>
<accession>Q17YS0</accession>
<protein>
    <recommendedName>
        <fullName evidence="1">Serine hydroxymethyltransferase</fullName>
        <shortName evidence="1">SHMT</shortName>
        <shortName evidence="1">Serine methylase</shortName>
        <ecNumber evidence="1">2.1.2.1</ecNumber>
    </recommendedName>
</protein>
<proteinExistence type="inferred from homology"/>
<name>GLYA_HELAH</name>
<feature type="chain" id="PRO_1000006262" description="Serine hydroxymethyltransferase">
    <location>
        <begin position="1"/>
        <end position="416"/>
    </location>
</feature>
<feature type="binding site" evidence="1">
    <location>
        <position position="118"/>
    </location>
    <ligand>
        <name>(6S)-5,6,7,8-tetrahydrofolate</name>
        <dbReference type="ChEBI" id="CHEBI:57453"/>
    </ligand>
</feature>
<feature type="binding site" evidence="1">
    <location>
        <begin position="122"/>
        <end position="124"/>
    </location>
    <ligand>
        <name>(6S)-5,6,7,8-tetrahydrofolate</name>
        <dbReference type="ChEBI" id="CHEBI:57453"/>
    </ligand>
</feature>
<feature type="binding site" evidence="1">
    <location>
        <position position="242"/>
    </location>
    <ligand>
        <name>(6S)-5,6,7,8-tetrahydrofolate</name>
        <dbReference type="ChEBI" id="CHEBI:57453"/>
    </ligand>
</feature>
<feature type="binding site" evidence="1">
    <location>
        <begin position="350"/>
        <end position="352"/>
    </location>
    <ligand>
        <name>(6S)-5,6,7,8-tetrahydrofolate</name>
        <dbReference type="ChEBI" id="CHEBI:57453"/>
    </ligand>
</feature>
<feature type="site" description="Plays an important role in substrate specificity" evidence="1">
    <location>
        <position position="225"/>
    </location>
</feature>
<feature type="modified residue" description="N6-(pyridoxal phosphate)lysine" evidence="1">
    <location>
        <position position="226"/>
    </location>
</feature>
<keyword id="KW-0028">Amino-acid biosynthesis</keyword>
<keyword id="KW-0963">Cytoplasm</keyword>
<keyword id="KW-0554">One-carbon metabolism</keyword>
<keyword id="KW-0663">Pyridoxal phosphate</keyword>
<keyword id="KW-0808">Transferase</keyword>
<comment type="function">
    <text evidence="1">Catalyzes the reversible interconversion of serine and glycine with tetrahydrofolate (THF) serving as the one-carbon carrier. This reaction serves as the major source of one-carbon groups required for the biosynthesis of purines, thymidylate, methionine, and other important biomolecules. Also exhibits THF-independent aldolase activity toward beta-hydroxyamino acids, producing glycine and aldehydes, via a retro-aldol mechanism.</text>
</comment>
<comment type="catalytic activity">
    <reaction evidence="1">
        <text>(6R)-5,10-methylene-5,6,7,8-tetrahydrofolate + glycine + H2O = (6S)-5,6,7,8-tetrahydrofolate + L-serine</text>
        <dbReference type="Rhea" id="RHEA:15481"/>
        <dbReference type="ChEBI" id="CHEBI:15377"/>
        <dbReference type="ChEBI" id="CHEBI:15636"/>
        <dbReference type="ChEBI" id="CHEBI:33384"/>
        <dbReference type="ChEBI" id="CHEBI:57305"/>
        <dbReference type="ChEBI" id="CHEBI:57453"/>
        <dbReference type="EC" id="2.1.2.1"/>
    </reaction>
</comment>
<comment type="cofactor">
    <cofactor evidence="1">
        <name>pyridoxal 5'-phosphate</name>
        <dbReference type="ChEBI" id="CHEBI:597326"/>
    </cofactor>
</comment>
<comment type="pathway">
    <text evidence="1">One-carbon metabolism; tetrahydrofolate interconversion.</text>
</comment>
<comment type="pathway">
    <text evidence="1">Amino-acid biosynthesis; glycine biosynthesis; glycine from L-serine: step 1/1.</text>
</comment>
<comment type="subunit">
    <text evidence="1">Homodimer.</text>
</comment>
<comment type="subcellular location">
    <subcellularLocation>
        <location evidence="1">Cytoplasm</location>
    </subcellularLocation>
</comment>
<comment type="similarity">
    <text evidence="1">Belongs to the SHMT family.</text>
</comment>
<gene>
    <name evidence="1" type="primary">glyA</name>
    <name type="ordered locus">Hac_0369</name>
</gene>